<keyword id="KW-0315">Glutamine amidotransferase</keyword>
<keyword id="KW-1185">Reference proteome</keyword>
<keyword id="KW-0808">Transferase</keyword>
<evidence type="ECO:0000250" key="1"/>
<evidence type="ECO:0000255" key="2">
    <source>
        <dbReference type="PROSITE-ProRule" id="PRU00609"/>
    </source>
</evidence>
<gene>
    <name type="ordered locus">MTH_191</name>
</gene>
<feature type="initiator methionine" description="Removed" evidence="1">
    <location>
        <position position="1"/>
    </location>
</feature>
<feature type="chain" id="PRO_0000056942" description="Putative glutamine amidotransferase MTH_191">
    <location>
        <begin position="2"/>
        <end position="305"/>
    </location>
</feature>
<feature type="domain" description="Glutamine amidotransferase type-2" evidence="2">
    <location>
        <begin position="2"/>
        <end position="305"/>
    </location>
</feature>
<feature type="active site" evidence="1">
    <location>
        <position position="2"/>
    </location>
</feature>
<organism>
    <name type="scientific">Methanothermobacter thermautotrophicus (strain ATCC 29096 / DSM 1053 / JCM 10044 / NBRC 100330 / Delta H)</name>
    <name type="common">Methanobacterium thermoautotrophicum</name>
    <dbReference type="NCBI Taxonomy" id="187420"/>
    <lineage>
        <taxon>Archaea</taxon>
        <taxon>Methanobacteriati</taxon>
        <taxon>Methanobacteriota</taxon>
        <taxon>Methanomada group</taxon>
        <taxon>Methanobacteria</taxon>
        <taxon>Methanobacteriales</taxon>
        <taxon>Methanobacteriaceae</taxon>
        <taxon>Methanothermobacter</taxon>
    </lineage>
</organism>
<dbReference type="EC" id="2.4.2.-"/>
<dbReference type="EMBL" id="AE000666">
    <property type="protein sequence ID" value="AAB84697.1"/>
    <property type="molecule type" value="Genomic_DNA"/>
</dbReference>
<dbReference type="PIR" id="A69122">
    <property type="entry name" value="A69122"/>
</dbReference>
<dbReference type="RefSeq" id="WP_010875830.1">
    <property type="nucleotide sequence ID" value="NC_000916.1"/>
</dbReference>
<dbReference type="SMR" id="O26293"/>
<dbReference type="STRING" id="187420.MTH_191"/>
<dbReference type="PaxDb" id="187420-MTH_191"/>
<dbReference type="EnsemblBacteria" id="AAB84697">
    <property type="protein sequence ID" value="AAB84697"/>
    <property type="gene ID" value="MTH_191"/>
</dbReference>
<dbReference type="KEGG" id="mth:MTH_191"/>
<dbReference type="PATRIC" id="fig|187420.15.peg.162"/>
<dbReference type="HOGENOM" id="CLU_077077_0_0_2"/>
<dbReference type="InParanoid" id="O26293"/>
<dbReference type="Proteomes" id="UP000005223">
    <property type="component" value="Chromosome"/>
</dbReference>
<dbReference type="GO" id="GO:0016740">
    <property type="term" value="F:transferase activity"/>
    <property type="evidence" value="ECO:0007669"/>
    <property type="project" value="UniProtKB-KW"/>
</dbReference>
<dbReference type="CDD" id="cd01907">
    <property type="entry name" value="GlxB"/>
    <property type="match status" value="1"/>
</dbReference>
<dbReference type="Gene3D" id="3.60.20.10">
    <property type="entry name" value="Glutamine Phosphoribosylpyrophosphate, subunit 1, domain 1"/>
    <property type="match status" value="2"/>
</dbReference>
<dbReference type="InterPro" id="IPR017932">
    <property type="entry name" value="GATase_2_dom"/>
</dbReference>
<dbReference type="InterPro" id="IPR029055">
    <property type="entry name" value="Ntn_hydrolases_N"/>
</dbReference>
<dbReference type="PANTHER" id="PTHR11907">
    <property type="entry name" value="AMIDOPHOSPHORIBOSYLTRANSFERASE"/>
    <property type="match status" value="1"/>
</dbReference>
<dbReference type="Pfam" id="PF13522">
    <property type="entry name" value="GATase_6"/>
    <property type="match status" value="1"/>
</dbReference>
<dbReference type="SUPFAM" id="SSF56235">
    <property type="entry name" value="N-terminal nucleophile aminohydrolases (Ntn hydrolases)"/>
    <property type="match status" value="1"/>
</dbReference>
<dbReference type="PROSITE" id="PS51278">
    <property type="entry name" value="GATASE_TYPE_2"/>
    <property type="match status" value="1"/>
</dbReference>
<accession>O26293</accession>
<reference key="1">
    <citation type="journal article" date="1997" name="J. Bacteriol.">
        <title>Complete genome sequence of Methanobacterium thermoautotrophicum deltaH: functional analysis and comparative genomics.</title>
        <authorList>
            <person name="Smith D.R."/>
            <person name="Doucette-Stamm L.A."/>
            <person name="Deloughery C."/>
            <person name="Lee H.-M."/>
            <person name="Dubois J."/>
            <person name="Aldredge T."/>
            <person name="Bashirzadeh R."/>
            <person name="Blakely D."/>
            <person name="Cook R."/>
            <person name="Gilbert K."/>
            <person name="Harrison D."/>
            <person name="Hoang L."/>
            <person name="Keagle P."/>
            <person name="Lumm W."/>
            <person name="Pothier B."/>
            <person name="Qiu D."/>
            <person name="Spadafora R."/>
            <person name="Vicare R."/>
            <person name="Wang Y."/>
            <person name="Wierzbowski J."/>
            <person name="Gibson R."/>
            <person name="Jiwani N."/>
            <person name="Caruso A."/>
            <person name="Bush D."/>
            <person name="Safer H."/>
            <person name="Patwell D."/>
            <person name="Prabhakar S."/>
            <person name="McDougall S."/>
            <person name="Shimer G."/>
            <person name="Goyal A."/>
            <person name="Pietrovski S."/>
            <person name="Church G.M."/>
            <person name="Daniels C.J."/>
            <person name="Mao J.-I."/>
            <person name="Rice P."/>
            <person name="Noelling J."/>
            <person name="Reeve J.N."/>
        </authorList>
    </citation>
    <scope>NUCLEOTIDE SEQUENCE [LARGE SCALE GENOMIC DNA]</scope>
    <source>
        <strain>ATCC 29096 / DSM 1053 / JCM 10044 / NBRC 100330 / Delta H</strain>
    </source>
</reference>
<proteinExistence type="inferred from homology"/>
<protein>
    <recommendedName>
        <fullName>Putative glutamine amidotransferase MTH_191</fullName>
        <ecNumber>2.4.2.-</ecNumber>
    </recommendedName>
</protein>
<sequence>MCGIAGVVYKDGKLHSVGADMTRMLHALQHRGPDSAGFAIYGGLGLEENDYLLNIEVKDKPGLLDMVKETVELVSPIGSDEVIPSVENHIIYRCRITLESFSQLKPLIMDIDSIDDVIVLNGSHSFEMIKDVGSVLEIADRYDTWSKKGTHAIGHTRFSTESIVDRYHAHPFQSYIIPDITVVHNGQITNYWKIREPLERKGHIFETNNDTECIVHYVADKLASGYSLEEALEQSVKDMDGPFSYIVGTPQGVGIAKDQLGLRPGVMAENDEVFAVASEEVSLREVMDTSEVEQISPGEVRVYEI</sequence>
<name>Y191_METTH</name>